<feature type="chain" id="PRO_0000178842" description="UDP-N-acetylglucosamine 1-carboxyvinyltransferase">
    <location>
        <begin position="1"/>
        <end position="419"/>
    </location>
</feature>
<feature type="active site" description="Proton donor" evidence="1">
    <location>
        <position position="116"/>
    </location>
</feature>
<feature type="binding site" evidence="1">
    <location>
        <begin position="22"/>
        <end position="23"/>
    </location>
    <ligand>
        <name>phosphoenolpyruvate</name>
        <dbReference type="ChEBI" id="CHEBI:58702"/>
    </ligand>
</feature>
<feature type="binding site" evidence="1">
    <location>
        <position position="92"/>
    </location>
    <ligand>
        <name>UDP-N-acetyl-alpha-D-glucosamine</name>
        <dbReference type="ChEBI" id="CHEBI:57705"/>
    </ligand>
</feature>
<feature type="binding site" evidence="1">
    <location>
        <begin position="121"/>
        <end position="125"/>
    </location>
    <ligand>
        <name>UDP-N-acetyl-alpha-D-glucosamine</name>
        <dbReference type="ChEBI" id="CHEBI:57705"/>
    </ligand>
</feature>
<feature type="binding site" evidence="1">
    <location>
        <position position="306"/>
    </location>
    <ligand>
        <name>UDP-N-acetyl-alpha-D-glucosamine</name>
        <dbReference type="ChEBI" id="CHEBI:57705"/>
    </ligand>
</feature>
<feature type="binding site" evidence="1">
    <location>
        <position position="328"/>
    </location>
    <ligand>
        <name>UDP-N-acetyl-alpha-D-glucosamine</name>
        <dbReference type="ChEBI" id="CHEBI:57705"/>
    </ligand>
</feature>
<feature type="modified residue" description="2-(S-cysteinyl)pyruvic acid O-phosphothioketal" evidence="1">
    <location>
        <position position="116"/>
    </location>
</feature>
<reference key="1">
    <citation type="journal article" date="1994" name="FEMS Microbiol. Lett.">
        <title>UDP-N-acetylglucosamine 1-carboxyvinyl-transferase from Acinetobacter calcoaceticus.</title>
        <authorList>
            <person name="Ehrt S."/>
            <person name="Hillen W."/>
        </authorList>
    </citation>
    <scope>NUCLEOTIDE SEQUENCE [GENOMIC DNA]</scope>
    <source>
        <strain>ATCC 11171 / DSM 590 / CCUG 2491 / LMG 988 / NCIMB 8250 / CIP 63.46 / B94</strain>
    </source>
</reference>
<gene>
    <name evidence="1" type="primary">murA</name>
    <name type="synonym">murZ</name>
</gene>
<keyword id="KW-0131">Cell cycle</keyword>
<keyword id="KW-0132">Cell division</keyword>
<keyword id="KW-0133">Cell shape</keyword>
<keyword id="KW-0961">Cell wall biogenesis/degradation</keyword>
<keyword id="KW-0963">Cytoplasm</keyword>
<keyword id="KW-0573">Peptidoglycan synthesis</keyword>
<keyword id="KW-0670">Pyruvate</keyword>
<keyword id="KW-0808">Transferase</keyword>
<comment type="function">
    <text>Cell wall formation. Adds enolpyruvyl to UDP-N-acetylglucosamine. Target for the antibiotic phosphomycin.</text>
</comment>
<comment type="catalytic activity">
    <reaction evidence="1">
        <text>phosphoenolpyruvate + UDP-N-acetyl-alpha-D-glucosamine = UDP-N-acetyl-3-O-(1-carboxyvinyl)-alpha-D-glucosamine + phosphate</text>
        <dbReference type="Rhea" id="RHEA:18681"/>
        <dbReference type="ChEBI" id="CHEBI:43474"/>
        <dbReference type="ChEBI" id="CHEBI:57705"/>
        <dbReference type="ChEBI" id="CHEBI:58702"/>
        <dbReference type="ChEBI" id="CHEBI:68483"/>
        <dbReference type="EC" id="2.5.1.7"/>
    </reaction>
</comment>
<comment type="pathway">
    <text evidence="1">Cell wall biogenesis; peptidoglycan biosynthesis.</text>
</comment>
<comment type="subcellular location">
    <subcellularLocation>
        <location evidence="1">Cytoplasm</location>
    </subcellularLocation>
</comment>
<comment type="similarity">
    <text evidence="1">Belongs to the EPSP synthase family. MurA subfamily.</text>
</comment>
<evidence type="ECO:0000255" key="1">
    <source>
        <dbReference type="HAMAP-Rule" id="MF_00111"/>
    </source>
</evidence>
<accession>P33986</accession>
<proteinExistence type="inferred from homology"/>
<sequence>MDKFVIQGGVKLEGEVRISGAKNAALPLLAAMILADTPITLKNVPDLKDVRTLVKLIGGLGITMSYEGETVIANTSTLDNQFAPYELVKTMRASILVLGPLLARYGSAKVSLPGGCAIGSRPVDQHLKALEALGAQIEVEAGYVHAKVDGRLKGGEVIFDMVTVGGTENILTAAVLAEGVTTIRNAAREPEITDLALMLIKMGAKIEGLDTDTLVVTGVESLHGCEYSVVADRIETGSYLAAAAITGGKVKTTHTDPNLLESVLDKFEEMGAEVTRGEDWIELDMLGKRPKAVSFRTLPHPEFPTDMQAQIMAVNAIGRGFATISETIFENRFMHVPELARMGANIQVEGNDAVVTGVEKLSAAPVMATDLRASFSLVLAALAAEGETIIDRIYHIDRGYEDIEAKLQGLGAQIKRVSE</sequence>
<dbReference type="EC" id="2.5.1.7" evidence="1"/>
<dbReference type="EMBL" id="L26051">
    <property type="protein sequence ID" value="AAA21618.1"/>
    <property type="molecule type" value="Genomic_DNA"/>
</dbReference>
<dbReference type="RefSeq" id="WP_004723727.1">
    <property type="nucleotide sequence ID" value="NZ_VZOG01000042.1"/>
</dbReference>
<dbReference type="SMR" id="P33986"/>
<dbReference type="STRING" id="106649.GCA_000829655_01551"/>
<dbReference type="UniPathway" id="UPA00219"/>
<dbReference type="GO" id="GO:0005737">
    <property type="term" value="C:cytoplasm"/>
    <property type="evidence" value="ECO:0007669"/>
    <property type="project" value="UniProtKB-SubCell"/>
</dbReference>
<dbReference type="GO" id="GO:0008760">
    <property type="term" value="F:UDP-N-acetylglucosamine 1-carboxyvinyltransferase activity"/>
    <property type="evidence" value="ECO:0007669"/>
    <property type="project" value="UniProtKB-UniRule"/>
</dbReference>
<dbReference type="GO" id="GO:0051301">
    <property type="term" value="P:cell division"/>
    <property type="evidence" value="ECO:0007669"/>
    <property type="project" value="UniProtKB-KW"/>
</dbReference>
<dbReference type="GO" id="GO:0071555">
    <property type="term" value="P:cell wall organization"/>
    <property type="evidence" value="ECO:0007669"/>
    <property type="project" value="UniProtKB-KW"/>
</dbReference>
<dbReference type="GO" id="GO:0009252">
    <property type="term" value="P:peptidoglycan biosynthetic process"/>
    <property type="evidence" value="ECO:0007669"/>
    <property type="project" value="UniProtKB-UniRule"/>
</dbReference>
<dbReference type="GO" id="GO:0008360">
    <property type="term" value="P:regulation of cell shape"/>
    <property type="evidence" value="ECO:0007669"/>
    <property type="project" value="UniProtKB-KW"/>
</dbReference>
<dbReference type="GO" id="GO:0019277">
    <property type="term" value="P:UDP-N-acetylgalactosamine biosynthetic process"/>
    <property type="evidence" value="ECO:0007669"/>
    <property type="project" value="InterPro"/>
</dbReference>
<dbReference type="CDD" id="cd01555">
    <property type="entry name" value="UdpNAET"/>
    <property type="match status" value="1"/>
</dbReference>
<dbReference type="FunFam" id="3.65.10.10:FF:000001">
    <property type="entry name" value="UDP-N-acetylglucosamine 1-carboxyvinyltransferase"/>
    <property type="match status" value="1"/>
</dbReference>
<dbReference type="FunFam" id="3.65.10.10:FF:000002">
    <property type="entry name" value="UDP-N-acetylglucosamine 1-carboxyvinyltransferase"/>
    <property type="match status" value="1"/>
</dbReference>
<dbReference type="Gene3D" id="3.65.10.10">
    <property type="entry name" value="Enolpyruvate transferase domain"/>
    <property type="match status" value="2"/>
</dbReference>
<dbReference type="HAMAP" id="MF_00111">
    <property type="entry name" value="MurA"/>
    <property type="match status" value="1"/>
</dbReference>
<dbReference type="InterPro" id="IPR001986">
    <property type="entry name" value="Enolpyruvate_Tfrase_dom"/>
</dbReference>
<dbReference type="InterPro" id="IPR036968">
    <property type="entry name" value="Enolpyruvate_Tfrase_sf"/>
</dbReference>
<dbReference type="InterPro" id="IPR050068">
    <property type="entry name" value="MurA_subfamily"/>
</dbReference>
<dbReference type="InterPro" id="IPR013792">
    <property type="entry name" value="RNA3'P_cycl/enolpyr_Trfase_a/b"/>
</dbReference>
<dbReference type="InterPro" id="IPR005750">
    <property type="entry name" value="UDP_GlcNAc_COvinyl_MurA"/>
</dbReference>
<dbReference type="NCBIfam" id="TIGR01072">
    <property type="entry name" value="murA"/>
    <property type="match status" value="1"/>
</dbReference>
<dbReference type="NCBIfam" id="NF006873">
    <property type="entry name" value="PRK09369.1"/>
    <property type="match status" value="1"/>
</dbReference>
<dbReference type="PANTHER" id="PTHR43783">
    <property type="entry name" value="UDP-N-ACETYLGLUCOSAMINE 1-CARBOXYVINYLTRANSFERASE"/>
    <property type="match status" value="1"/>
</dbReference>
<dbReference type="PANTHER" id="PTHR43783:SF1">
    <property type="entry name" value="UDP-N-ACETYLGLUCOSAMINE 1-CARBOXYVINYLTRANSFERASE"/>
    <property type="match status" value="1"/>
</dbReference>
<dbReference type="Pfam" id="PF00275">
    <property type="entry name" value="EPSP_synthase"/>
    <property type="match status" value="1"/>
</dbReference>
<dbReference type="SUPFAM" id="SSF55205">
    <property type="entry name" value="EPT/RTPC-like"/>
    <property type="match status" value="1"/>
</dbReference>
<protein>
    <recommendedName>
        <fullName evidence="1">UDP-N-acetylglucosamine 1-carboxyvinyltransferase</fullName>
        <ecNumber evidence="1">2.5.1.7</ecNumber>
    </recommendedName>
    <alternativeName>
        <fullName evidence="1">Enoylpyruvate transferase</fullName>
    </alternativeName>
    <alternativeName>
        <fullName evidence="1">UDP-N-acetylglucosamine enolpyruvyl transferase</fullName>
        <shortName evidence="1">EPT</shortName>
    </alternativeName>
</protein>
<name>MURA_ACIGI</name>
<organism>
    <name type="scientific">Acinetobacter guillouiae</name>
    <name type="common">Acinetobacter genomosp. 11</name>
    <dbReference type="NCBI Taxonomy" id="106649"/>
    <lineage>
        <taxon>Bacteria</taxon>
        <taxon>Pseudomonadati</taxon>
        <taxon>Pseudomonadota</taxon>
        <taxon>Gammaproteobacteria</taxon>
        <taxon>Moraxellales</taxon>
        <taxon>Moraxellaceae</taxon>
        <taxon>Acinetobacter</taxon>
    </lineage>
</organism>